<sequence>MLFSPPLQRATLIQRYKRFLADVITPDGTALTLHCPNTGAMTGCATPGDTVWYSTSENTKRKYPHTWELTETQFGAFICVNTLRANQLTKEAIQENRLPALAGYNILKSEVKYGAERSRIDFMLQADFRPDCYIEVKSVTLAEKENGYFPDAITERGQKHLRELMGVAAAGHRAVVVFAVLHSAITRFSPARHIDIKYAQLLSEAQNKGVEVLAYKAELSAQKMELNEPVPITL</sequence>
<name>SFSA_SALG2</name>
<evidence type="ECO:0000255" key="1">
    <source>
        <dbReference type="HAMAP-Rule" id="MF_00095"/>
    </source>
</evidence>
<comment type="function">
    <text evidence="1">Binds to DNA non-specifically. Could be a regulatory factor involved in maltose metabolism.</text>
</comment>
<comment type="similarity">
    <text evidence="1">Belongs to the SfsA family.</text>
</comment>
<proteinExistence type="inferred from homology"/>
<protein>
    <recommendedName>
        <fullName evidence="1">Sugar fermentation stimulation protein A</fullName>
    </recommendedName>
</protein>
<organism>
    <name type="scientific">Salmonella gallinarum (strain 287/91 / NCTC 13346)</name>
    <dbReference type="NCBI Taxonomy" id="550538"/>
    <lineage>
        <taxon>Bacteria</taxon>
        <taxon>Pseudomonadati</taxon>
        <taxon>Pseudomonadota</taxon>
        <taxon>Gammaproteobacteria</taxon>
        <taxon>Enterobacterales</taxon>
        <taxon>Enterobacteriaceae</taxon>
        <taxon>Salmonella</taxon>
    </lineage>
</organism>
<dbReference type="EMBL" id="AM933173">
    <property type="protein sequence ID" value="CAR36098.1"/>
    <property type="molecule type" value="Genomic_DNA"/>
</dbReference>
<dbReference type="RefSeq" id="WP_000899405.1">
    <property type="nucleotide sequence ID" value="NC_011274.1"/>
</dbReference>
<dbReference type="SMR" id="B5RHC6"/>
<dbReference type="KEGG" id="seg:SG0191"/>
<dbReference type="HOGENOM" id="CLU_052299_2_0_6"/>
<dbReference type="Proteomes" id="UP000008321">
    <property type="component" value="Chromosome"/>
</dbReference>
<dbReference type="GO" id="GO:0003677">
    <property type="term" value="F:DNA binding"/>
    <property type="evidence" value="ECO:0007669"/>
    <property type="project" value="UniProtKB-KW"/>
</dbReference>
<dbReference type="CDD" id="cd22359">
    <property type="entry name" value="SfsA-like_bacterial"/>
    <property type="match status" value="1"/>
</dbReference>
<dbReference type="FunFam" id="2.40.50.580:FF:000001">
    <property type="entry name" value="Sugar fermentation stimulation protein A"/>
    <property type="match status" value="1"/>
</dbReference>
<dbReference type="FunFam" id="3.40.1350.60:FF:000001">
    <property type="entry name" value="Sugar fermentation stimulation protein A"/>
    <property type="match status" value="1"/>
</dbReference>
<dbReference type="Gene3D" id="2.40.50.580">
    <property type="match status" value="1"/>
</dbReference>
<dbReference type="Gene3D" id="3.40.1350.60">
    <property type="match status" value="1"/>
</dbReference>
<dbReference type="HAMAP" id="MF_00095">
    <property type="entry name" value="SfsA"/>
    <property type="match status" value="1"/>
</dbReference>
<dbReference type="InterPro" id="IPR005224">
    <property type="entry name" value="SfsA"/>
</dbReference>
<dbReference type="InterPro" id="IPR040452">
    <property type="entry name" value="SfsA_C"/>
</dbReference>
<dbReference type="InterPro" id="IPR041465">
    <property type="entry name" value="SfsA_N"/>
</dbReference>
<dbReference type="NCBIfam" id="TIGR00230">
    <property type="entry name" value="sfsA"/>
    <property type="match status" value="1"/>
</dbReference>
<dbReference type="PANTHER" id="PTHR30545">
    <property type="entry name" value="SUGAR FERMENTATION STIMULATION PROTEIN A"/>
    <property type="match status" value="1"/>
</dbReference>
<dbReference type="PANTHER" id="PTHR30545:SF2">
    <property type="entry name" value="SUGAR FERMENTATION STIMULATION PROTEIN A"/>
    <property type="match status" value="1"/>
</dbReference>
<dbReference type="Pfam" id="PF03749">
    <property type="entry name" value="SfsA"/>
    <property type="match status" value="1"/>
</dbReference>
<dbReference type="Pfam" id="PF17746">
    <property type="entry name" value="SfsA_N"/>
    <property type="match status" value="1"/>
</dbReference>
<reference key="1">
    <citation type="journal article" date="2008" name="Genome Res.">
        <title>Comparative genome analysis of Salmonella enteritidis PT4 and Salmonella gallinarum 287/91 provides insights into evolutionary and host adaptation pathways.</title>
        <authorList>
            <person name="Thomson N.R."/>
            <person name="Clayton D.J."/>
            <person name="Windhorst D."/>
            <person name="Vernikos G."/>
            <person name="Davidson S."/>
            <person name="Churcher C."/>
            <person name="Quail M.A."/>
            <person name="Stevens M."/>
            <person name="Jones M.A."/>
            <person name="Watson M."/>
            <person name="Barron A."/>
            <person name="Layton A."/>
            <person name="Pickard D."/>
            <person name="Kingsley R.A."/>
            <person name="Bignell A."/>
            <person name="Clark L."/>
            <person name="Harris B."/>
            <person name="Ormond D."/>
            <person name="Abdellah Z."/>
            <person name="Brooks K."/>
            <person name="Cherevach I."/>
            <person name="Chillingworth T."/>
            <person name="Woodward J."/>
            <person name="Norberczak H."/>
            <person name="Lord A."/>
            <person name="Arrowsmith C."/>
            <person name="Jagels K."/>
            <person name="Moule S."/>
            <person name="Mungall K."/>
            <person name="Saunders M."/>
            <person name="Whitehead S."/>
            <person name="Chabalgoity J.A."/>
            <person name="Maskell D."/>
            <person name="Humphreys T."/>
            <person name="Roberts M."/>
            <person name="Barrow P.A."/>
            <person name="Dougan G."/>
            <person name="Parkhill J."/>
        </authorList>
    </citation>
    <scope>NUCLEOTIDE SEQUENCE [LARGE SCALE GENOMIC DNA]</scope>
    <source>
        <strain>287/91 / NCTC 13346</strain>
    </source>
</reference>
<keyword id="KW-0238">DNA-binding</keyword>
<gene>
    <name evidence="1" type="primary">sfsA</name>
    <name type="ordered locus">SG0191</name>
</gene>
<accession>B5RHC6</accession>
<feature type="chain" id="PRO_1000093588" description="Sugar fermentation stimulation protein A">
    <location>
        <begin position="1"/>
        <end position="234"/>
    </location>
</feature>
<feature type="DNA-binding region" description="H-T-H motif" evidence="1">
    <location>
        <begin position="201"/>
        <end position="220"/>
    </location>
</feature>